<sequence>MSVGADKIISNIKADAQAKADEIISKAKAESEKIIADGEAKAQIEKEQILDSANKQADMKYQQIISEAKVNSRRKELEAREELIEKAFRIASEKIEKLASENSANYVESLKVMIKDASIQVGSTQLEILVREDDVENVKSMIDEVSEYVTKETGNETSFVIGEPIDIIGGAVVKTVDGDVEVKNTIEARMLRYRKHLRSEVAKKLFR</sequence>
<organism>
    <name type="scientific">Methanosphaera stadtmanae (strain ATCC 43021 / DSM 3091 / JCM 11832 / MCB-3)</name>
    <dbReference type="NCBI Taxonomy" id="339860"/>
    <lineage>
        <taxon>Archaea</taxon>
        <taxon>Methanobacteriati</taxon>
        <taxon>Methanobacteriota</taxon>
        <taxon>Methanomada group</taxon>
        <taxon>Methanobacteria</taxon>
        <taxon>Methanobacteriales</taxon>
        <taxon>Methanobacteriaceae</taxon>
        <taxon>Methanosphaera</taxon>
    </lineage>
</organism>
<dbReference type="EMBL" id="CP000102">
    <property type="protein sequence ID" value="ABC57519.1"/>
    <property type="molecule type" value="Genomic_DNA"/>
</dbReference>
<dbReference type="RefSeq" id="WP_011406718.1">
    <property type="nucleotide sequence ID" value="NC_007681.1"/>
</dbReference>
<dbReference type="SMR" id="Q2NF84"/>
<dbReference type="STRING" id="339860.Msp_1138"/>
<dbReference type="KEGG" id="mst:Msp_1138"/>
<dbReference type="eggNOG" id="arCOG00869">
    <property type="taxonomic scope" value="Archaea"/>
</dbReference>
<dbReference type="HOGENOM" id="CLU_105846_1_0_2"/>
<dbReference type="OrthoDB" id="4691at2157"/>
<dbReference type="Proteomes" id="UP000001931">
    <property type="component" value="Chromosome"/>
</dbReference>
<dbReference type="GO" id="GO:0005886">
    <property type="term" value="C:plasma membrane"/>
    <property type="evidence" value="ECO:0007669"/>
    <property type="project" value="UniProtKB-SubCell"/>
</dbReference>
<dbReference type="GO" id="GO:0033178">
    <property type="term" value="C:proton-transporting two-sector ATPase complex, catalytic domain"/>
    <property type="evidence" value="ECO:0007669"/>
    <property type="project" value="InterPro"/>
</dbReference>
<dbReference type="GO" id="GO:0005524">
    <property type="term" value="F:ATP binding"/>
    <property type="evidence" value="ECO:0007669"/>
    <property type="project" value="UniProtKB-UniRule"/>
</dbReference>
<dbReference type="GO" id="GO:0046933">
    <property type="term" value="F:proton-transporting ATP synthase activity, rotational mechanism"/>
    <property type="evidence" value="ECO:0007669"/>
    <property type="project" value="UniProtKB-UniRule"/>
</dbReference>
<dbReference type="GO" id="GO:0046961">
    <property type="term" value="F:proton-transporting ATPase activity, rotational mechanism"/>
    <property type="evidence" value="ECO:0007669"/>
    <property type="project" value="InterPro"/>
</dbReference>
<dbReference type="GO" id="GO:0042777">
    <property type="term" value="P:proton motive force-driven plasma membrane ATP synthesis"/>
    <property type="evidence" value="ECO:0007669"/>
    <property type="project" value="UniProtKB-UniRule"/>
</dbReference>
<dbReference type="Gene3D" id="3.30.2320.30">
    <property type="entry name" value="ATP synthase, E subunit, C-terminal"/>
    <property type="match status" value="1"/>
</dbReference>
<dbReference type="Gene3D" id="1.20.5.620">
    <property type="entry name" value="F1F0 ATP synthase subunit B, membrane domain"/>
    <property type="match status" value="1"/>
</dbReference>
<dbReference type="HAMAP" id="MF_00311">
    <property type="entry name" value="ATP_synth_E_arch"/>
    <property type="match status" value="1"/>
</dbReference>
<dbReference type="InterPro" id="IPR028987">
    <property type="entry name" value="ATP_synth_B-like_membr_sf"/>
</dbReference>
<dbReference type="InterPro" id="IPR038495">
    <property type="entry name" value="ATPase_E_C"/>
</dbReference>
<dbReference type="InterPro" id="IPR002842">
    <property type="entry name" value="ATPase_V1_Esu"/>
</dbReference>
<dbReference type="PANTHER" id="PTHR45715">
    <property type="entry name" value="ATPASE H+-TRANSPORTING V1 SUBUNIT E1A-RELATED"/>
    <property type="match status" value="1"/>
</dbReference>
<dbReference type="Pfam" id="PF01991">
    <property type="entry name" value="vATP-synt_E"/>
    <property type="match status" value="1"/>
</dbReference>
<dbReference type="SUPFAM" id="SSF81573">
    <property type="entry name" value="F1F0 ATP synthase subunit B, membrane domain"/>
    <property type="match status" value="1"/>
</dbReference>
<dbReference type="SUPFAM" id="SSF160527">
    <property type="entry name" value="V-type ATPase subunit E-like"/>
    <property type="match status" value="1"/>
</dbReference>
<evidence type="ECO:0000255" key="1">
    <source>
        <dbReference type="HAMAP-Rule" id="MF_00311"/>
    </source>
</evidence>
<name>AATE_METST</name>
<gene>
    <name evidence="1" type="primary">atpE</name>
    <name type="ordered locus">Msp_1138</name>
</gene>
<proteinExistence type="inferred from homology"/>
<reference key="1">
    <citation type="journal article" date="2006" name="J. Bacteriol.">
        <title>The genome sequence of Methanosphaera stadtmanae reveals why this human intestinal archaeon is restricted to methanol and H2 for methane formation and ATP synthesis.</title>
        <authorList>
            <person name="Fricke W.F."/>
            <person name="Seedorf H."/>
            <person name="Henne A."/>
            <person name="Kruer M."/>
            <person name="Liesegang H."/>
            <person name="Hedderich R."/>
            <person name="Gottschalk G."/>
            <person name="Thauer R.K."/>
        </authorList>
    </citation>
    <scope>NUCLEOTIDE SEQUENCE [LARGE SCALE GENOMIC DNA]</scope>
    <source>
        <strain>ATCC 43021 / DSM 3091 / JCM 11832 / MCB-3</strain>
    </source>
</reference>
<protein>
    <recommendedName>
        <fullName evidence="1">A-type ATP synthase subunit E</fullName>
    </recommendedName>
</protein>
<feature type="chain" id="PRO_1000059418" description="A-type ATP synthase subunit E">
    <location>
        <begin position="1"/>
        <end position="207"/>
    </location>
</feature>
<keyword id="KW-0066">ATP synthesis</keyword>
<keyword id="KW-1003">Cell membrane</keyword>
<keyword id="KW-0375">Hydrogen ion transport</keyword>
<keyword id="KW-0406">Ion transport</keyword>
<keyword id="KW-0472">Membrane</keyword>
<keyword id="KW-1185">Reference proteome</keyword>
<keyword id="KW-0813">Transport</keyword>
<comment type="function">
    <text evidence="1">Component of the A-type ATP synthase that produces ATP from ADP in the presence of a proton gradient across the membrane.</text>
</comment>
<comment type="subunit">
    <text evidence="1">Has multiple subunits with at least A(3), B(3), C, D, E, F, H, I and proteolipid K(x).</text>
</comment>
<comment type="subcellular location">
    <subcellularLocation>
        <location evidence="1">Cell membrane</location>
        <topology evidence="1">Peripheral membrane protein</topology>
    </subcellularLocation>
</comment>
<comment type="similarity">
    <text evidence="1">Belongs to the V-ATPase E subunit family.</text>
</comment>
<accession>Q2NF84</accession>